<name>PP249_ARATH</name>
<feature type="chain" id="PRO_0000356108" description="Pentatricopeptide repeat-containing protein At3g22690">
    <location>
        <begin position="1"/>
        <end position="842"/>
    </location>
</feature>
<feature type="repeat" description="PPR 1">
    <location>
        <begin position="98"/>
        <end position="132"/>
    </location>
</feature>
<feature type="repeat" description="PPR 2">
    <location>
        <begin position="133"/>
        <end position="167"/>
    </location>
</feature>
<feature type="repeat" description="PPR 3">
    <location>
        <begin position="168"/>
        <end position="202"/>
    </location>
</feature>
<feature type="repeat" description="PPR 4">
    <location>
        <begin position="203"/>
        <end position="234"/>
    </location>
</feature>
<feature type="repeat" description="PPR 5">
    <location>
        <begin position="235"/>
        <end position="269"/>
    </location>
</feature>
<feature type="repeat" description="PPR 6">
    <location>
        <begin position="270"/>
        <end position="300"/>
    </location>
</feature>
<feature type="repeat" description="PPR 7">
    <location>
        <begin position="301"/>
        <end position="335"/>
    </location>
</feature>
<feature type="repeat" description="PPR 8">
    <location>
        <begin position="336"/>
        <end position="370"/>
    </location>
</feature>
<feature type="repeat" description="PPR 9">
    <location>
        <begin position="371"/>
        <end position="401"/>
    </location>
</feature>
<feature type="repeat" description="PPR 10">
    <location>
        <begin position="402"/>
        <end position="436"/>
    </location>
</feature>
<feature type="repeat" description="PPR 11">
    <location>
        <begin position="437"/>
        <end position="463"/>
    </location>
</feature>
<feature type="repeat" description="PPR 12">
    <location>
        <begin position="469"/>
        <end position="503"/>
    </location>
</feature>
<feature type="repeat" description="PPR 13">
    <location>
        <begin position="504"/>
        <end position="534"/>
    </location>
</feature>
<feature type="repeat" description="PPR 14">
    <location>
        <begin position="535"/>
        <end position="569"/>
    </location>
</feature>
<feature type="repeat" description="PPR 15">
    <location>
        <begin position="570"/>
        <end position="605"/>
    </location>
</feature>
<feature type="repeat" description="PPR 16">
    <location>
        <begin position="606"/>
        <end position="636"/>
    </location>
</feature>
<feature type="region of interest" description="Type E motif">
    <location>
        <begin position="641"/>
        <end position="716"/>
    </location>
</feature>
<feature type="region of interest" description="Type E(+) motif">
    <location>
        <begin position="717"/>
        <end position="747"/>
    </location>
</feature>
<feature type="region of interest" description="Type DYW motif">
    <location>
        <begin position="748"/>
        <end position="842"/>
    </location>
</feature>
<comment type="alternative products">
    <event type="alternative splicing"/>
    <isoform>
        <id>Q9LUJ2-1</id>
        <name>1</name>
        <sequence type="displayed"/>
    </isoform>
    <text>A number of isoforms are produced. According to EST sequences.</text>
</comment>
<comment type="similarity">
    <text evidence="1">Belongs to the PPR family. PCMP-H subfamily.</text>
</comment>
<comment type="online information" name="Pentatricopeptide repeat proteins">
    <link uri="https://ppr.plantenergy.uwa.edu.au"/>
</comment>
<proteinExistence type="inferred from homology"/>
<protein>
    <recommendedName>
        <fullName>Pentatricopeptide repeat-containing protein At3g22690</fullName>
    </recommendedName>
</protein>
<accession>Q9LUJ2</accession>
<keyword id="KW-0025">Alternative splicing</keyword>
<keyword id="KW-1185">Reference proteome</keyword>
<keyword id="KW-0677">Repeat</keyword>
<evidence type="ECO:0000305" key="1"/>
<organism>
    <name type="scientific">Arabidopsis thaliana</name>
    <name type="common">Mouse-ear cress</name>
    <dbReference type="NCBI Taxonomy" id="3702"/>
    <lineage>
        <taxon>Eukaryota</taxon>
        <taxon>Viridiplantae</taxon>
        <taxon>Streptophyta</taxon>
        <taxon>Embryophyta</taxon>
        <taxon>Tracheophyta</taxon>
        <taxon>Spermatophyta</taxon>
        <taxon>Magnoliopsida</taxon>
        <taxon>eudicotyledons</taxon>
        <taxon>Gunneridae</taxon>
        <taxon>Pentapetalae</taxon>
        <taxon>rosids</taxon>
        <taxon>malvids</taxon>
        <taxon>Brassicales</taxon>
        <taxon>Brassicaceae</taxon>
        <taxon>Camelineae</taxon>
        <taxon>Arabidopsis</taxon>
    </lineage>
</organism>
<dbReference type="EMBL" id="AB022223">
    <property type="protein sequence ID" value="BAB01244.1"/>
    <property type="molecule type" value="Genomic_DNA"/>
</dbReference>
<dbReference type="EMBL" id="CP002686">
    <property type="protein sequence ID" value="AEE76666.1"/>
    <property type="molecule type" value="Genomic_DNA"/>
</dbReference>
<dbReference type="RefSeq" id="NP_001189950.1">
    <molecule id="Q9LUJ2-1"/>
    <property type="nucleotide sequence ID" value="NM_001203021.2"/>
</dbReference>
<dbReference type="SMR" id="Q9LUJ2"/>
<dbReference type="FunCoup" id="Q9LUJ2">
    <property type="interactions" value="300"/>
</dbReference>
<dbReference type="STRING" id="3702.Q9LUJ2"/>
<dbReference type="PaxDb" id="3702-AT3G22690.1"/>
<dbReference type="EnsemblPlants" id="AT3G22690.2">
    <molecule id="Q9LUJ2-1"/>
    <property type="protein sequence ID" value="AT3G22690.2"/>
    <property type="gene ID" value="AT3G22690"/>
</dbReference>
<dbReference type="GeneID" id="821840"/>
<dbReference type="Gramene" id="AT3G22690.2">
    <molecule id="Q9LUJ2-1"/>
    <property type="protein sequence ID" value="AT3G22690.2"/>
    <property type="gene ID" value="AT3G22690"/>
</dbReference>
<dbReference type="KEGG" id="ath:AT3G22690"/>
<dbReference type="Araport" id="AT3G22690"/>
<dbReference type="TAIR" id="AT3G22690">
    <property type="gene designation" value="YS1"/>
</dbReference>
<dbReference type="eggNOG" id="KOG4197">
    <property type="taxonomic scope" value="Eukaryota"/>
</dbReference>
<dbReference type="HOGENOM" id="CLU_002706_37_8_1"/>
<dbReference type="InParanoid" id="Q9LUJ2"/>
<dbReference type="OMA" id="GKQEMAC"/>
<dbReference type="PhylomeDB" id="Q9LUJ2"/>
<dbReference type="PRO" id="PR:Q9LUJ2"/>
<dbReference type="Proteomes" id="UP000006548">
    <property type="component" value="Chromosome 3"/>
</dbReference>
<dbReference type="ExpressionAtlas" id="Q9LUJ2">
    <property type="expression patterns" value="baseline and differential"/>
</dbReference>
<dbReference type="GO" id="GO:0003723">
    <property type="term" value="F:RNA binding"/>
    <property type="evidence" value="ECO:0007669"/>
    <property type="project" value="InterPro"/>
</dbReference>
<dbReference type="GO" id="GO:0008270">
    <property type="term" value="F:zinc ion binding"/>
    <property type="evidence" value="ECO:0007669"/>
    <property type="project" value="InterPro"/>
</dbReference>
<dbReference type="GO" id="GO:0009451">
    <property type="term" value="P:RNA modification"/>
    <property type="evidence" value="ECO:0007669"/>
    <property type="project" value="InterPro"/>
</dbReference>
<dbReference type="FunFam" id="1.25.40.10:FF:000954">
    <property type="entry name" value="LOW protein: PPR containing-like protein"/>
    <property type="match status" value="1"/>
</dbReference>
<dbReference type="FunFam" id="1.25.40.10:FF:000690">
    <property type="entry name" value="Pentatricopeptide repeat-containing protein"/>
    <property type="match status" value="1"/>
</dbReference>
<dbReference type="FunFam" id="1.25.40.10:FF:001238">
    <property type="entry name" value="Pentatricopeptide repeat-containing protein At3g22690"/>
    <property type="match status" value="1"/>
</dbReference>
<dbReference type="FunFam" id="1.25.40.10:FF:000436">
    <property type="entry name" value="Pentatricopeptide repeat-containing protein At5g39350 family"/>
    <property type="match status" value="1"/>
</dbReference>
<dbReference type="FunFam" id="1.25.40.10:FF:000557">
    <property type="entry name" value="Pentatricopeptide repeat-containing protein, chloroplastic"/>
    <property type="match status" value="1"/>
</dbReference>
<dbReference type="Gene3D" id="1.25.40.10">
    <property type="entry name" value="Tetratricopeptide repeat domain"/>
    <property type="match status" value="5"/>
</dbReference>
<dbReference type="InterPro" id="IPR032867">
    <property type="entry name" value="DYW_dom"/>
</dbReference>
<dbReference type="InterPro" id="IPR046848">
    <property type="entry name" value="E_motif"/>
</dbReference>
<dbReference type="InterPro" id="IPR046849">
    <property type="entry name" value="Eplus_motif"/>
</dbReference>
<dbReference type="InterPro" id="IPR002885">
    <property type="entry name" value="Pentatricopeptide_rpt"/>
</dbReference>
<dbReference type="InterPro" id="IPR046960">
    <property type="entry name" value="PPR_At4g14850-like_plant"/>
</dbReference>
<dbReference type="InterPro" id="IPR011990">
    <property type="entry name" value="TPR-like_helical_dom_sf"/>
</dbReference>
<dbReference type="NCBIfam" id="TIGR00756">
    <property type="entry name" value="PPR"/>
    <property type="match status" value="7"/>
</dbReference>
<dbReference type="PANTHER" id="PTHR47926">
    <property type="entry name" value="PENTATRICOPEPTIDE REPEAT-CONTAINING PROTEIN"/>
    <property type="match status" value="1"/>
</dbReference>
<dbReference type="PANTHER" id="PTHR47926:SF436">
    <property type="entry name" value="PENTATRICOPEPTIDE REPEAT-CONTAINING PROTEIN ELI1, CHLOROPLASTIC-LIKE ISOFORM X2"/>
    <property type="match status" value="1"/>
</dbReference>
<dbReference type="Pfam" id="PF14432">
    <property type="entry name" value="DYW_deaminase"/>
    <property type="match status" value="1"/>
</dbReference>
<dbReference type="Pfam" id="PF20431">
    <property type="entry name" value="E_motif"/>
    <property type="match status" value="1"/>
</dbReference>
<dbReference type="Pfam" id="PF20430">
    <property type="entry name" value="Eplus_motif"/>
    <property type="match status" value="1"/>
</dbReference>
<dbReference type="Pfam" id="PF01535">
    <property type="entry name" value="PPR"/>
    <property type="match status" value="6"/>
</dbReference>
<dbReference type="Pfam" id="PF13041">
    <property type="entry name" value="PPR_2"/>
    <property type="match status" value="3"/>
</dbReference>
<dbReference type="SUPFAM" id="SSF48452">
    <property type="entry name" value="TPR-like"/>
    <property type="match status" value="1"/>
</dbReference>
<dbReference type="PROSITE" id="PS51375">
    <property type="entry name" value="PPR"/>
    <property type="match status" value="17"/>
</dbReference>
<gene>
    <name type="primary">PCMP-H56</name>
    <name type="ordered locus">At3g22690</name>
    <name type="ORF">MWI23.6</name>
</gene>
<sequence length="842" mass="93462">MAMLGNVLHLSPMVLATTTTTKPSLLNQSKCTKATPSSLKNCKTIDELKMFHRSLTKQGLDNDVSTITKLVARSCELGTRESLSFAKEVFENSESYGTCFMYNSLIRGYASSGLCNEAILLFLRMMNSGISPDKYTFPFGLSACAKSRAKGNGIQIHGLIVKMGYAKDLFVQNSLVHFYAECGELDSARKVFDEMSERNVVSWTSMICGYARRDFAKDAVDLFFRMVRDEEVTPNSVTMVCVISACAKLEDLETGEKVYAFIRNSGIEVNDLMVSALVDMYMKCNAIDVAKRLFDEYGASNLDLCNAMASNYVRQGLTREALGVFNLMMDSGVRPDRISMLSAISSCSQLRNILWGKSCHGYVLRNGFESWDNICNALIDMYMKCHRQDTAFRIFDRMSNKTVVTWNSIVAGYVENGEVDAAWETFETMPEKNIVSWNTIISGLVQGSLFEEAIEVFCSMQSQEGVNADGVTMMSIASACGHLGALDLAKWIYYYIEKNGIQLDVRLGTTLVDMFSRCGDPESAMSIFNSLTNRDVSAWTAAIGAMAMAGNAERAIELFDDMIEQGLKPDGVAFVGALTACSHGGLVQQGKEIFYSMLKLHGVSPEDVHYGCMVDLLGRAGLLEEAVQLIEDMPMEPNDVIWNSLLAACRVQGNVEMAAYAAEKIQVLAPERTGSYVLLSNVYASAGRWNDMAKVRLSMKEKGLRKPPGTSSIQIRGKTHEFTSGDESHPEMPNIEAMLDEVSQRASHLGHVPDLSNVLMDVDEKEKIFMLSRHSEKLAMAYGLISSNKGTTIRIVKNLRVCSDCHSFAKFASKVYNREIILRDNNRFHYIRQGKCSCGDFW</sequence>
<reference key="1">
    <citation type="journal article" date="2000" name="DNA Res.">
        <title>Structural analysis of Arabidopsis thaliana chromosome 3. I. Sequence features of the regions of 4,504,864 bp covered by sixty P1 and TAC clones.</title>
        <authorList>
            <person name="Sato S."/>
            <person name="Nakamura Y."/>
            <person name="Kaneko T."/>
            <person name="Katoh T."/>
            <person name="Asamizu E."/>
            <person name="Tabata S."/>
        </authorList>
    </citation>
    <scope>NUCLEOTIDE SEQUENCE [LARGE SCALE GENOMIC DNA]</scope>
    <source>
        <strain>cv. Columbia</strain>
    </source>
</reference>
<reference key="2">
    <citation type="journal article" date="2017" name="Plant J.">
        <title>Araport11: a complete reannotation of the Arabidopsis thaliana reference genome.</title>
        <authorList>
            <person name="Cheng C.Y."/>
            <person name="Krishnakumar V."/>
            <person name="Chan A.P."/>
            <person name="Thibaud-Nissen F."/>
            <person name="Schobel S."/>
            <person name="Town C.D."/>
        </authorList>
    </citation>
    <scope>GENOME REANNOTATION</scope>
    <source>
        <strain>cv. Columbia</strain>
    </source>
</reference>
<reference key="3">
    <citation type="journal article" date="2000" name="Plant Mol. Biol.">
        <title>In Arabidopsis thaliana, 1% of the genome codes for a novel protein family unique to plants.</title>
        <authorList>
            <person name="Aubourg S."/>
            <person name="Boudet N."/>
            <person name="Kreis M."/>
            <person name="Lecharny A."/>
        </authorList>
    </citation>
    <scope>GENE FAMILY</scope>
</reference>
<reference key="4">
    <citation type="journal article" date="2004" name="Plant Cell">
        <title>Genome-wide analysis of Arabidopsis pentatricopeptide repeat proteins reveals their essential role in organelle biogenesis.</title>
        <authorList>
            <person name="Lurin C."/>
            <person name="Andres C."/>
            <person name="Aubourg S."/>
            <person name="Bellaoui M."/>
            <person name="Bitton F."/>
            <person name="Bruyere C."/>
            <person name="Caboche M."/>
            <person name="Debast C."/>
            <person name="Gualberto J."/>
            <person name="Hoffmann B."/>
            <person name="Lecharny A."/>
            <person name="Le Ret M."/>
            <person name="Martin-Magniette M.-L."/>
            <person name="Mireau H."/>
            <person name="Peeters N."/>
            <person name="Renou J.-P."/>
            <person name="Szurek B."/>
            <person name="Taconnat L."/>
            <person name="Small I."/>
        </authorList>
    </citation>
    <scope>GENE FAMILY</scope>
</reference>